<comment type="catalytic activity">
    <reaction>
        <text>a uridine in RNA = a pseudouridine in RNA</text>
        <dbReference type="Rhea" id="RHEA:48348"/>
        <dbReference type="Rhea" id="RHEA-COMP:12068"/>
        <dbReference type="Rhea" id="RHEA-COMP:12069"/>
        <dbReference type="ChEBI" id="CHEBI:65314"/>
        <dbReference type="ChEBI" id="CHEBI:65315"/>
    </reaction>
</comment>
<comment type="similarity">
    <text evidence="3">Belongs to the pseudouridine synthase RluA family.</text>
</comment>
<dbReference type="EC" id="5.4.99.-"/>
<dbReference type="EMBL" id="AE000511">
    <property type="protein sequence ID" value="AAD07999.1"/>
    <property type="molecule type" value="Genomic_DNA"/>
</dbReference>
<dbReference type="PIR" id="D64639">
    <property type="entry name" value="D64639"/>
</dbReference>
<dbReference type="RefSeq" id="NP_207748.1">
    <property type="nucleotide sequence ID" value="NC_000915.1"/>
</dbReference>
<dbReference type="RefSeq" id="WP_000409617.1">
    <property type="nucleotide sequence ID" value="NC_018939.1"/>
</dbReference>
<dbReference type="SMR" id="O25610"/>
<dbReference type="IntAct" id="O25610">
    <property type="interactions" value="2"/>
</dbReference>
<dbReference type="STRING" id="85962.HP_0956"/>
<dbReference type="PaxDb" id="85962-C694_04925"/>
<dbReference type="EnsemblBacteria" id="AAD07999">
    <property type="protein sequence ID" value="AAD07999"/>
    <property type="gene ID" value="HP_0956"/>
</dbReference>
<dbReference type="KEGG" id="heo:C694_04925"/>
<dbReference type="KEGG" id="hpy:HP_0956"/>
<dbReference type="PATRIC" id="fig|85962.47.peg.1024"/>
<dbReference type="eggNOG" id="COG0564">
    <property type="taxonomic scope" value="Bacteria"/>
</dbReference>
<dbReference type="InParanoid" id="O25610"/>
<dbReference type="OrthoDB" id="128480at2"/>
<dbReference type="PhylomeDB" id="O25610"/>
<dbReference type="Proteomes" id="UP000000429">
    <property type="component" value="Chromosome"/>
</dbReference>
<dbReference type="GO" id="GO:0140098">
    <property type="term" value="F:catalytic activity, acting on RNA"/>
    <property type="evidence" value="ECO:0007669"/>
    <property type="project" value="UniProtKB-ARBA"/>
</dbReference>
<dbReference type="GO" id="GO:0009982">
    <property type="term" value="F:pseudouridine synthase activity"/>
    <property type="evidence" value="ECO:0000318"/>
    <property type="project" value="GO_Central"/>
</dbReference>
<dbReference type="GO" id="GO:0003723">
    <property type="term" value="F:RNA binding"/>
    <property type="evidence" value="ECO:0007669"/>
    <property type="project" value="UniProtKB-KW"/>
</dbReference>
<dbReference type="GO" id="GO:0000455">
    <property type="term" value="P:enzyme-directed rRNA pseudouridine synthesis"/>
    <property type="evidence" value="ECO:0000318"/>
    <property type="project" value="GO_Central"/>
</dbReference>
<dbReference type="CDD" id="cd02869">
    <property type="entry name" value="PseudoU_synth_RluA_like"/>
    <property type="match status" value="1"/>
</dbReference>
<dbReference type="Gene3D" id="3.30.2350.10">
    <property type="entry name" value="Pseudouridine synthase"/>
    <property type="match status" value="1"/>
</dbReference>
<dbReference type="InterPro" id="IPR020103">
    <property type="entry name" value="PsdUridine_synth_cat_dom_sf"/>
</dbReference>
<dbReference type="InterPro" id="IPR006224">
    <property type="entry name" value="PsdUridine_synth_RluA-like_CS"/>
</dbReference>
<dbReference type="InterPro" id="IPR006145">
    <property type="entry name" value="PsdUridine_synth_RsuA/RluA"/>
</dbReference>
<dbReference type="InterPro" id="IPR050188">
    <property type="entry name" value="RluA_PseudoU_synthase"/>
</dbReference>
<dbReference type="PANTHER" id="PTHR21600">
    <property type="entry name" value="MITOCHONDRIAL RNA PSEUDOURIDINE SYNTHASE"/>
    <property type="match status" value="1"/>
</dbReference>
<dbReference type="PANTHER" id="PTHR21600:SF44">
    <property type="entry name" value="RIBOSOMAL LARGE SUBUNIT PSEUDOURIDINE SYNTHASE D"/>
    <property type="match status" value="1"/>
</dbReference>
<dbReference type="Pfam" id="PF00849">
    <property type="entry name" value="PseudoU_synth_2"/>
    <property type="match status" value="1"/>
</dbReference>
<dbReference type="SUPFAM" id="SSF55120">
    <property type="entry name" value="Pseudouridine synthase"/>
    <property type="match status" value="1"/>
</dbReference>
<dbReference type="PROSITE" id="PS01129">
    <property type="entry name" value="PSI_RLU"/>
    <property type="match status" value="1"/>
</dbReference>
<dbReference type="PROSITE" id="PS50889">
    <property type="entry name" value="S4"/>
    <property type="match status" value="1"/>
</dbReference>
<evidence type="ECO:0000250" key="1"/>
<evidence type="ECO:0000255" key="2">
    <source>
        <dbReference type="PROSITE-ProRule" id="PRU00182"/>
    </source>
</evidence>
<evidence type="ECO:0000305" key="3"/>
<accession>O25610</accession>
<proteinExistence type="inferred from homology"/>
<sequence>MEKAYKILSVQENISHKKAKALIDSGLVSIGGKKLMVARKELPKNTHFSVQKVEKPSVIFEDENILALFKPPFIESYDLASFFKGWALLHRLDKETSGVVLLVKENSEFHLKAKKAFKDRAVKKEYLALTQGIIEEEREINAPILTFKTTKAFSKISKKGQEAVTIITPLKIINKKTLLKVGIKTGRTHQIRVHLKHINHPIIGDTLYNNEPSLAKRLMLHAHKIALLGYEFEAIAPKEFEI</sequence>
<gene>
    <name type="ordered locus">HP_0956</name>
</gene>
<feature type="chain" id="PRO_0000162737" description="Uncharacterized RNA pseudouridine synthase HP_0956">
    <location>
        <begin position="1"/>
        <end position="242"/>
    </location>
</feature>
<feature type="domain" description="S4 RNA-binding" evidence="2">
    <location>
        <begin position="2"/>
        <end position="62"/>
    </location>
</feature>
<feature type="active site" evidence="1">
    <location>
        <position position="93"/>
    </location>
</feature>
<protein>
    <recommendedName>
        <fullName>Uncharacterized RNA pseudouridine synthase HP_0956</fullName>
        <ecNumber>5.4.99.-</ecNumber>
    </recommendedName>
    <alternativeName>
        <fullName>RNA pseudouridylate synthase</fullName>
    </alternativeName>
    <alternativeName>
        <fullName>RNA-uridine isomerase</fullName>
    </alternativeName>
</protein>
<reference key="1">
    <citation type="journal article" date="1997" name="Nature">
        <title>The complete genome sequence of the gastric pathogen Helicobacter pylori.</title>
        <authorList>
            <person name="Tomb J.-F."/>
            <person name="White O."/>
            <person name="Kerlavage A.R."/>
            <person name="Clayton R.A."/>
            <person name="Sutton G.G."/>
            <person name="Fleischmann R.D."/>
            <person name="Ketchum K.A."/>
            <person name="Klenk H.-P."/>
            <person name="Gill S.R."/>
            <person name="Dougherty B.A."/>
            <person name="Nelson K.E."/>
            <person name="Quackenbush J."/>
            <person name="Zhou L."/>
            <person name="Kirkness E.F."/>
            <person name="Peterson S.N."/>
            <person name="Loftus B.J."/>
            <person name="Richardson D.L."/>
            <person name="Dodson R.J."/>
            <person name="Khalak H.G."/>
            <person name="Glodek A."/>
            <person name="McKenney K."/>
            <person name="FitzGerald L.M."/>
            <person name="Lee N."/>
            <person name="Adams M.D."/>
            <person name="Hickey E.K."/>
            <person name="Berg D.E."/>
            <person name="Gocayne J.D."/>
            <person name="Utterback T.R."/>
            <person name="Peterson J.D."/>
            <person name="Kelley J.M."/>
            <person name="Cotton M.D."/>
            <person name="Weidman J.F."/>
            <person name="Fujii C."/>
            <person name="Bowman C."/>
            <person name="Watthey L."/>
            <person name="Wallin E."/>
            <person name="Hayes W.S."/>
            <person name="Borodovsky M."/>
            <person name="Karp P.D."/>
            <person name="Smith H.O."/>
            <person name="Fraser C.M."/>
            <person name="Venter J.C."/>
        </authorList>
    </citation>
    <scope>NUCLEOTIDE SEQUENCE [LARGE SCALE GENOMIC DNA]</scope>
    <source>
        <strain>ATCC 700392 / 26695</strain>
    </source>
</reference>
<organism>
    <name type="scientific">Helicobacter pylori (strain ATCC 700392 / 26695)</name>
    <name type="common">Campylobacter pylori</name>
    <dbReference type="NCBI Taxonomy" id="85962"/>
    <lineage>
        <taxon>Bacteria</taxon>
        <taxon>Pseudomonadati</taxon>
        <taxon>Campylobacterota</taxon>
        <taxon>Epsilonproteobacteria</taxon>
        <taxon>Campylobacterales</taxon>
        <taxon>Helicobacteraceae</taxon>
        <taxon>Helicobacter</taxon>
    </lineage>
</organism>
<name>Y956_HELPY</name>
<keyword id="KW-0413">Isomerase</keyword>
<keyword id="KW-1185">Reference proteome</keyword>
<keyword id="KW-0694">RNA-binding</keyword>